<accession>C5D5V2</accession>
<evidence type="ECO:0000255" key="1">
    <source>
        <dbReference type="HAMAP-Rule" id="MF_00488"/>
    </source>
</evidence>
<dbReference type="EC" id="1.1.1.27" evidence="1"/>
<dbReference type="EMBL" id="CP001638">
    <property type="protein sequence ID" value="ACS23400.1"/>
    <property type="molecule type" value="Genomic_DNA"/>
</dbReference>
<dbReference type="SMR" id="C5D5V2"/>
<dbReference type="STRING" id="471223.GWCH70_0489"/>
<dbReference type="KEGG" id="gwc:GWCH70_0489"/>
<dbReference type="eggNOG" id="COG0039">
    <property type="taxonomic scope" value="Bacteria"/>
</dbReference>
<dbReference type="HOGENOM" id="CLU_045401_1_1_9"/>
<dbReference type="OrthoDB" id="9802969at2"/>
<dbReference type="UniPathway" id="UPA00554">
    <property type="reaction ID" value="UER00611"/>
</dbReference>
<dbReference type="GO" id="GO:0005737">
    <property type="term" value="C:cytoplasm"/>
    <property type="evidence" value="ECO:0007669"/>
    <property type="project" value="UniProtKB-SubCell"/>
</dbReference>
<dbReference type="GO" id="GO:0004459">
    <property type="term" value="F:L-lactate dehydrogenase activity"/>
    <property type="evidence" value="ECO:0007669"/>
    <property type="project" value="UniProtKB-UniRule"/>
</dbReference>
<dbReference type="GO" id="GO:0006096">
    <property type="term" value="P:glycolytic process"/>
    <property type="evidence" value="ECO:0007669"/>
    <property type="project" value="UniProtKB-UniRule"/>
</dbReference>
<dbReference type="GO" id="GO:0006089">
    <property type="term" value="P:lactate metabolic process"/>
    <property type="evidence" value="ECO:0007669"/>
    <property type="project" value="TreeGrafter"/>
</dbReference>
<dbReference type="CDD" id="cd05291">
    <property type="entry name" value="HicDH_like"/>
    <property type="match status" value="1"/>
</dbReference>
<dbReference type="FunFam" id="3.90.110.10:FF:000005">
    <property type="entry name" value="L-lactate dehydrogenase"/>
    <property type="match status" value="1"/>
</dbReference>
<dbReference type="FunFam" id="3.40.50.720:FF:000018">
    <property type="entry name" value="Malate dehydrogenase"/>
    <property type="match status" value="1"/>
</dbReference>
<dbReference type="Gene3D" id="3.90.110.10">
    <property type="entry name" value="Lactate dehydrogenase/glycoside hydrolase, family 4, C-terminal"/>
    <property type="match status" value="1"/>
</dbReference>
<dbReference type="Gene3D" id="3.40.50.720">
    <property type="entry name" value="NAD(P)-binding Rossmann-like Domain"/>
    <property type="match status" value="1"/>
</dbReference>
<dbReference type="HAMAP" id="MF_00488">
    <property type="entry name" value="Lactate_dehydrog"/>
    <property type="match status" value="1"/>
</dbReference>
<dbReference type="InterPro" id="IPR001557">
    <property type="entry name" value="L-lactate/malate_DH"/>
</dbReference>
<dbReference type="InterPro" id="IPR011304">
    <property type="entry name" value="L-lactate_DH"/>
</dbReference>
<dbReference type="InterPro" id="IPR018177">
    <property type="entry name" value="L-lactate_DH_AS"/>
</dbReference>
<dbReference type="InterPro" id="IPR022383">
    <property type="entry name" value="Lactate/malate_DH_C"/>
</dbReference>
<dbReference type="InterPro" id="IPR001236">
    <property type="entry name" value="Lactate/malate_DH_N"/>
</dbReference>
<dbReference type="InterPro" id="IPR015955">
    <property type="entry name" value="Lactate_DH/Glyco_Ohase_4_C"/>
</dbReference>
<dbReference type="InterPro" id="IPR036291">
    <property type="entry name" value="NAD(P)-bd_dom_sf"/>
</dbReference>
<dbReference type="NCBIfam" id="TIGR01771">
    <property type="entry name" value="L-LDH-NAD"/>
    <property type="match status" value="1"/>
</dbReference>
<dbReference type="NCBIfam" id="NF000824">
    <property type="entry name" value="PRK00066.1"/>
    <property type="match status" value="1"/>
</dbReference>
<dbReference type="NCBIfam" id="NF004863">
    <property type="entry name" value="PRK06223.1"/>
    <property type="match status" value="1"/>
</dbReference>
<dbReference type="PANTHER" id="PTHR43128">
    <property type="entry name" value="L-2-HYDROXYCARBOXYLATE DEHYDROGENASE (NAD(P)(+))"/>
    <property type="match status" value="1"/>
</dbReference>
<dbReference type="PANTHER" id="PTHR43128:SF16">
    <property type="entry name" value="L-LACTATE DEHYDROGENASE"/>
    <property type="match status" value="1"/>
</dbReference>
<dbReference type="Pfam" id="PF02866">
    <property type="entry name" value="Ldh_1_C"/>
    <property type="match status" value="1"/>
</dbReference>
<dbReference type="Pfam" id="PF00056">
    <property type="entry name" value="Ldh_1_N"/>
    <property type="match status" value="1"/>
</dbReference>
<dbReference type="PIRSF" id="PIRSF000102">
    <property type="entry name" value="Lac_mal_DH"/>
    <property type="match status" value="1"/>
</dbReference>
<dbReference type="PRINTS" id="PR00086">
    <property type="entry name" value="LLDHDRGNASE"/>
</dbReference>
<dbReference type="SUPFAM" id="SSF56327">
    <property type="entry name" value="LDH C-terminal domain-like"/>
    <property type="match status" value="1"/>
</dbReference>
<dbReference type="SUPFAM" id="SSF51735">
    <property type="entry name" value="NAD(P)-binding Rossmann-fold domains"/>
    <property type="match status" value="1"/>
</dbReference>
<dbReference type="PROSITE" id="PS00064">
    <property type="entry name" value="L_LDH"/>
    <property type="match status" value="1"/>
</dbReference>
<organism>
    <name type="scientific">Geobacillus sp. (strain WCH70)</name>
    <dbReference type="NCBI Taxonomy" id="471223"/>
    <lineage>
        <taxon>Bacteria</taxon>
        <taxon>Bacillati</taxon>
        <taxon>Bacillota</taxon>
        <taxon>Bacilli</taxon>
        <taxon>Bacillales</taxon>
        <taxon>Anoxybacillaceae</taxon>
        <taxon>Geobacillus</taxon>
    </lineage>
</organism>
<reference key="1">
    <citation type="submission" date="2009-06" db="EMBL/GenBank/DDBJ databases">
        <title>Complete sequence of chromosome of Geopacillus sp. WCH70.</title>
        <authorList>
            <consortium name="US DOE Joint Genome Institute"/>
            <person name="Lucas S."/>
            <person name="Copeland A."/>
            <person name="Lapidus A."/>
            <person name="Glavina del Rio T."/>
            <person name="Dalin E."/>
            <person name="Tice H."/>
            <person name="Bruce D."/>
            <person name="Goodwin L."/>
            <person name="Pitluck S."/>
            <person name="Chertkov O."/>
            <person name="Brettin T."/>
            <person name="Detter J.C."/>
            <person name="Han C."/>
            <person name="Larimer F."/>
            <person name="Land M."/>
            <person name="Hauser L."/>
            <person name="Kyrpides N."/>
            <person name="Mikhailova N."/>
            <person name="Brumm P."/>
            <person name="Mead D.A."/>
            <person name="Richardson P."/>
        </authorList>
    </citation>
    <scope>NUCLEOTIDE SEQUENCE [LARGE SCALE GENOMIC DNA]</scope>
    <source>
        <strain>WCH70</strain>
    </source>
</reference>
<gene>
    <name evidence="1" type="primary">ldh</name>
    <name type="ordered locus">GWCH70_0489</name>
</gene>
<sequence length="319" mass="35838">MKRQCMNRVALIGTGFVGASYAFALMNQGIADELVLIDVNKEKAEGDVMDLNHGKVFAPKPMNIWHGDYQDCQDADLVVICAGANQKPGETRLDLVDKNMNIFKTIVDSVMRSGFDGIFLVATNPVDILTYATWKFSGLPKERVIGSGTILDTARFRFLLSEYFQVAPTNVHAYIIGEHGDTELPVWSHAEIGSVPIEQILSQNDRYRKEDLENIFVNVRDAAYQVIEKKGATYYGIAMGLVRITRAILHNENAILTVSAYLDGQYNEQNVYIGVPAIINRNGIREVMELKLNETEQQQFHHSATVLKDILSRYFDDVK</sequence>
<comment type="function">
    <text evidence="1">Catalyzes the conversion of lactate to pyruvate.</text>
</comment>
<comment type="catalytic activity">
    <reaction evidence="1">
        <text>(S)-lactate + NAD(+) = pyruvate + NADH + H(+)</text>
        <dbReference type="Rhea" id="RHEA:23444"/>
        <dbReference type="ChEBI" id="CHEBI:15361"/>
        <dbReference type="ChEBI" id="CHEBI:15378"/>
        <dbReference type="ChEBI" id="CHEBI:16651"/>
        <dbReference type="ChEBI" id="CHEBI:57540"/>
        <dbReference type="ChEBI" id="CHEBI:57945"/>
        <dbReference type="EC" id="1.1.1.27"/>
    </reaction>
</comment>
<comment type="activity regulation">
    <text evidence="1">Allosterically activated by fructose 1,6-bisphosphate (FBP).</text>
</comment>
<comment type="pathway">
    <text evidence="1">Fermentation; pyruvate fermentation to lactate; (S)-lactate from pyruvate: step 1/1.</text>
</comment>
<comment type="subunit">
    <text evidence="1">Homotetramer.</text>
</comment>
<comment type="subcellular location">
    <subcellularLocation>
        <location evidence="1">Cytoplasm</location>
    </subcellularLocation>
</comment>
<comment type="similarity">
    <text evidence="1">Belongs to the LDH/MDH superfamily. LDH family.</text>
</comment>
<feature type="chain" id="PRO_1000206449" description="L-lactate dehydrogenase">
    <location>
        <begin position="1"/>
        <end position="319"/>
    </location>
</feature>
<feature type="active site" description="Proton acceptor" evidence="1">
    <location>
        <position position="179"/>
    </location>
</feature>
<feature type="binding site" evidence="1">
    <location>
        <position position="17"/>
    </location>
    <ligand>
        <name>NAD(+)</name>
        <dbReference type="ChEBI" id="CHEBI:57540"/>
    </ligand>
</feature>
<feature type="binding site" evidence="1">
    <location>
        <position position="38"/>
    </location>
    <ligand>
        <name>NAD(+)</name>
        <dbReference type="ChEBI" id="CHEBI:57540"/>
    </ligand>
</feature>
<feature type="binding site" evidence="1">
    <location>
        <position position="43"/>
    </location>
    <ligand>
        <name>NAD(+)</name>
        <dbReference type="ChEBI" id="CHEBI:57540"/>
    </ligand>
</feature>
<feature type="binding site" evidence="1">
    <location>
        <position position="69"/>
    </location>
    <ligand>
        <name>NAD(+)</name>
        <dbReference type="ChEBI" id="CHEBI:57540"/>
    </ligand>
</feature>
<feature type="binding site" evidence="1">
    <location>
        <begin position="83"/>
        <end position="84"/>
    </location>
    <ligand>
        <name>NAD(+)</name>
        <dbReference type="ChEBI" id="CHEBI:57540"/>
    </ligand>
</feature>
<feature type="binding site" evidence="1">
    <location>
        <position position="86"/>
    </location>
    <ligand>
        <name>substrate</name>
    </ligand>
</feature>
<feature type="binding site" evidence="1">
    <location>
        <position position="92"/>
    </location>
    <ligand>
        <name>substrate</name>
    </ligand>
</feature>
<feature type="binding site" evidence="1">
    <location>
        <position position="105"/>
    </location>
    <ligand>
        <name>NAD(+)</name>
        <dbReference type="ChEBI" id="CHEBI:57540"/>
    </ligand>
</feature>
<feature type="binding site" evidence="1">
    <location>
        <begin position="122"/>
        <end position="124"/>
    </location>
    <ligand>
        <name>NAD(+)</name>
        <dbReference type="ChEBI" id="CHEBI:57540"/>
    </ligand>
</feature>
<feature type="binding site" evidence="1">
    <location>
        <begin position="124"/>
        <end position="127"/>
    </location>
    <ligand>
        <name>substrate</name>
    </ligand>
</feature>
<feature type="binding site" evidence="1">
    <location>
        <position position="147"/>
    </location>
    <ligand>
        <name>NAD(+)</name>
        <dbReference type="ChEBI" id="CHEBI:57540"/>
    </ligand>
</feature>
<feature type="binding site" evidence="1">
    <location>
        <begin position="152"/>
        <end position="155"/>
    </location>
    <ligand>
        <name>substrate</name>
    </ligand>
</feature>
<feature type="binding site" evidence="1">
    <location>
        <position position="157"/>
    </location>
    <ligand>
        <name>beta-D-fructose 1,6-bisphosphate</name>
        <dbReference type="ChEBI" id="CHEBI:32966"/>
        <note>allosteric activator</note>
    </ligand>
</feature>
<feature type="binding site" evidence="1">
    <location>
        <position position="172"/>
    </location>
    <ligand>
        <name>beta-D-fructose 1,6-bisphosphate</name>
        <dbReference type="ChEBI" id="CHEBI:32966"/>
        <note>allosteric activator</note>
    </ligand>
</feature>
<feature type="binding site" evidence="1">
    <location>
        <position position="233"/>
    </location>
    <ligand>
        <name>substrate</name>
    </ligand>
</feature>
<feature type="modified residue" description="Phosphotyrosine" evidence="1">
    <location>
        <position position="224"/>
    </location>
</feature>
<name>LDH_GEOSW</name>
<proteinExistence type="inferred from homology"/>
<keyword id="KW-0021">Allosteric enzyme</keyword>
<keyword id="KW-0963">Cytoplasm</keyword>
<keyword id="KW-0520">NAD</keyword>
<keyword id="KW-0560">Oxidoreductase</keyword>
<keyword id="KW-0597">Phosphoprotein</keyword>
<protein>
    <recommendedName>
        <fullName evidence="1">L-lactate dehydrogenase</fullName>
        <shortName evidence="1">L-LDH</shortName>
        <ecNumber evidence="1">1.1.1.27</ecNumber>
    </recommendedName>
</protein>